<gene>
    <name type="primary">EHF</name>
</gene>
<keyword id="KW-0238">DNA-binding</keyword>
<keyword id="KW-0539">Nucleus</keyword>
<keyword id="KW-1185">Reference proteome</keyword>
<keyword id="KW-0804">Transcription</keyword>
<keyword id="KW-0805">Transcription regulation</keyword>
<evidence type="ECO:0000250" key="1"/>
<evidence type="ECO:0000255" key="2">
    <source>
        <dbReference type="PROSITE-ProRule" id="PRU00237"/>
    </source>
</evidence>
<evidence type="ECO:0000255" key="3">
    <source>
        <dbReference type="PROSITE-ProRule" id="PRU00762"/>
    </source>
</evidence>
<evidence type="ECO:0000256" key="4">
    <source>
        <dbReference type="SAM" id="MobiDB-lite"/>
    </source>
</evidence>
<evidence type="ECO:0000305" key="5"/>
<protein>
    <recommendedName>
        <fullName>ETS homologous factor</fullName>
    </recommendedName>
    <alternativeName>
        <fullName>ETS domain-containing transcription factor</fullName>
    </alternativeName>
</protein>
<name>EHF_PANTR</name>
<proteinExistence type="inferred from homology"/>
<dbReference type="EMBL" id="DQ977366">
    <property type="protein sequence ID" value="ABM91992.1"/>
    <property type="molecule type" value="Genomic_DNA"/>
</dbReference>
<dbReference type="RefSeq" id="NP_001075037.1">
    <property type="nucleotide sequence ID" value="NM_001081568.1"/>
</dbReference>
<dbReference type="RefSeq" id="XP_009458439.1">
    <property type="nucleotide sequence ID" value="XM_009460164.4"/>
</dbReference>
<dbReference type="SMR" id="A2T737"/>
<dbReference type="FunCoup" id="A2T737">
    <property type="interactions" value="1708"/>
</dbReference>
<dbReference type="STRING" id="9598.ENSPTRP00000081462"/>
<dbReference type="PaxDb" id="9598-ENSPTRP00000006078"/>
<dbReference type="Ensembl" id="ENSPTRT00000006591.5">
    <property type="protein sequence ID" value="ENSPTRP00000006078.4"/>
    <property type="gene ID" value="ENSPTRG00000003498.7"/>
</dbReference>
<dbReference type="Ensembl" id="ENSPTRT00000098886.1">
    <property type="protein sequence ID" value="ENSPTRP00000076408.1"/>
    <property type="gene ID" value="ENSPTRG00000003498.7"/>
</dbReference>
<dbReference type="GeneID" id="739336"/>
<dbReference type="KEGG" id="ptr:739336"/>
<dbReference type="CTD" id="26298"/>
<dbReference type="VGNC" id="VGNC:1049">
    <property type="gene designation" value="EHF"/>
</dbReference>
<dbReference type="eggNOG" id="KOG3804">
    <property type="taxonomic scope" value="Eukaryota"/>
</dbReference>
<dbReference type="GeneTree" id="ENSGT00940000159310"/>
<dbReference type="HOGENOM" id="CLU_048172_0_0_1"/>
<dbReference type="InParanoid" id="A2T737"/>
<dbReference type="OMA" id="MMDSKTF"/>
<dbReference type="OrthoDB" id="1621at9604"/>
<dbReference type="TreeFam" id="TF318679"/>
<dbReference type="Proteomes" id="UP000002277">
    <property type="component" value="Chromosome 11"/>
</dbReference>
<dbReference type="Bgee" id="ENSPTRG00000003498">
    <property type="expression patterns" value="Expressed in cortex of kidney and 4 other cell types or tissues"/>
</dbReference>
<dbReference type="GO" id="GO:0005634">
    <property type="term" value="C:nucleus"/>
    <property type="evidence" value="ECO:0000318"/>
    <property type="project" value="GO_Central"/>
</dbReference>
<dbReference type="GO" id="GO:0000981">
    <property type="term" value="F:DNA-binding transcription factor activity, RNA polymerase II-specific"/>
    <property type="evidence" value="ECO:0000318"/>
    <property type="project" value="GO_Central"/>
</dbReference>
<dbReference type="GO" id="GO:1990837">
    <property type="term" value="F:sequence-specific double-stranded DNA binding"/>
    <property type="evidence" value="ECO:0007669"/>
    <property type="project" value="UniProtKB-ARBA"/>
</dbReference>
<dbReference type="GO" id="GO:0030154">
    <property type="term" value="P:cell differentiation"/>
    <property type="evidence" value="ECO:0000318"/>
    <property type="project" value="GO_Central"/>
</dbReference>
<dbReference type="GO" id="GO:0006357">
    <property type="term" value="P:regulation of transcription by RNA polymerase II"/>
    <property type="evidence" value="ECO:0000318"/>
    <property type="project" value="GO_Central"/>
</dbReference>
<dbReference type="CDD" id="cd08539">
    <property type="entry name" value="SAM_PNT-ESE-3-like"/>
    <property type="match status" value="1"/>
</dbReference>
<dbReference type="FunFam" id="1.10.10.10:FF:000136">
    <property type="entry name" value="ETS homologous factor isoform X1"/>
    <property type="match status" value="1"/>
</dbReference>
<dbReference type="FunFam" id="1.10.150.50:FF:000026">
    <property type="entry name" value="ETS homologous factor isoform X1"/>
    <property type="match status" value="1"/>
</dbReference>
<dbReference type="Gene3D" id="1.10.150.50">
    <property type="entry name" value="Transcription Factor, Ets-1"/>
    <property type="match status" value="1"/>
</dbReference>
<dbReference type="Gene3D" id="1.10.10.10">
    <property type="entry name" value="Winged helix-like DNA-binding domain superfamily/Winged helix DNA-binding domain"/>
    <property type="match status" value="1"/>
</dbReference>
<dbReference type="InterPro" id="IPR033071">
    <property type="entry name" value="EHF_SAM_Pointed_dom"/>
</dbReference>
<dbReference type="InterPro" id="IPR000418">
    <property type="entry name" value="Ets_dom"/>
</dbReference>
<dbReference type="InterPro" id="IPR046328">
    <property type="entry name" value="ETS_fam"/>
</dbReference>
<dbReference type="InterPro" id="IPR003118">
    <property type="entry name" value="Pointed_dom"/>
</dbReference>
<dbReference type="InterPro" id="IPR013761">
    <property type="entry name" value="SAM/pointed_sf"/>
</dbReference>
<dbReference type="InterPro" id="IPR036388">
    <property type="entry name" value="WH-like_DNA-bd_sf"/>
</dbReference>
<dbReference type="InterPro" id="IPR036390">
    <property type="entry name" value="WH_DNA-bd_sf"/>
</dbReference>
<dbReference type="PANTHER" id="PTHR11849">
    <property type="entry name" value="ETS"/>
    <property type="match status" value="1"/>
</dbReference>
<dbReference type="PANTHER" id="PTHR11849:SF171">
    <property type="entry name" value="ETS HOMOLOGOUS FACTOR"/>
    <property type="match status" value="1"/>
</dbReference>
<dbReference type="Pfam" id="PF00178">
    <property type="entry name" value="Ets"/>
    <property type="match status" value="1"/>
</dbReference>
<dbReference type="Pfam" id="PF02198">
    <property type="entry name" value="SAM_PNT"/>
    <property type="match status" value="1"/>
</dbReference>
<dbReference type="PRINTS" id="PR00454">
    <property type="entry name" value="ETSDOMAIN"/>
</dbReference>
<dbReference type="SMART" id="SM00413">
    <property type="entry name" value="ETS"/>
    <property type="match status" value="1"/>
</dbReference>
<dbReference type="SMART" id="SM00251">
    <property type="entry name" value="SAM_PNT"/>
    <property type="match status" value="1"/>
</dbReference>
<dbReference type="SUPFAM" id="SSF47769">
    <property type="entry name" value="SAM/Pointed domain"/>
    <property type="match status" value="1"/>
</dbReference>
<dbReference type="SUPFAM" id="SSF46785">
    <property type="entry name" value="Winged helix' DNA-binding domain"/>
    <property type="match status" value="1"/>
</dbReference>
<dbReference type="PROSITE" id="PS50061">
    <property type="entry name" value="ETS_DOMAIN_3"/>
    <property type="match status" value="1"/>
</dbReference>
<dbReference type="PROSITE" id="PS51433">
    <property type="entry name" value="PNT"/>
    <property type="match status" value="1"/>
</dbReference>
<comment type="function">
    <text evidence="1">Transcriptional activator that may play a role in regulating epithelial cell differentiation and proliferation. May act as a repressor for a specific subset of ETS/AP-1-responsive genes, and as a modulator of the nuclear response to mitogen-activated protein kinase signaling cascades. Binds to DNA sequences containing the consensus nucleotide core sequence GGAA. Involved in regulation of TNFRSF10B/DR5 expression through Ets-binding sequences on the TNFRSF10B/DR5 promoter (By similarity).</text>
</comment>
<comment type="subcellular location">
    <subcellularLocation>
        <location evidence="2">Nucleus</location>
    </subcellularLocation>
</comment>
<comment type="domain">
    <text evidence="1">The PNT domain acts as a transcriptional activator.</text>
</comment>
<comment type="similarity">
    <text evidence="5">Belongs to the ETS family.</text>
</comment>
<reference key="1">
    <citation type="submission" date="2006-08" db="EMBL/GenBank/DDBJ databases">
        <title>Positive selection in transcription factor genes on the human lineage.</title>
        <authorList>
            <person name="Nickel G.C."/>
            <person name="Tefft D.L."/>
            <person name="Trevarthen K."/>
            <person name="Funt J."/>
            <person name="Adams M.D."/>
        </authorList>
    </citation>
    <scope>NUCLEOTIDE SEQUENCE [GENOMIC DNA]</scope>
</reference>
<organism>
    <name type="scientific">Pan troglodytes</name>
    <name type="common">Chimpanzee</name>
    <dbReference type="NCBI Taxonomy" id="9598"/>
    <lineage>
        <taxon>Eukaryota</taxon>
        <taxon>Metazoa</taxon>
        <taxon>Chordata</taxon>
        <taxon>Craniata</taxon>
        <taxon>Vertebrata</taxon>
        <taxon>Euteleostomi</taxon>
        <taxon>Mammalia</taxon>
        <taxon>Eutheria</taxon>
        <taxon>Euarchontoglires</taxon>
        <taxon>Primates</taxon>
        <taxon>Haplorrhini</taxon>
        <taxon>Catarrhini</taxon>
        <taxon>Hominidae</taxon>
        <taxon>Pan</taxon>
    </lineage>
</organism>
<sequence>MILEGGGVMNLNPGNNLLHQPPAWTDSYSTCNVSSGFFGGQWHEIHPQYWTKYQVWEWLQHLLDTNQLDASCIPFQEFDINGEHLCSMSLQEFTRAAGTAGQLLYSNLQHLKWNGQCSSDLFQSTHNVIVKTEQTEPSIVNTWKDENYLYDTNYGSTVDLLDSKTFCRAQISMTTTSHLPVAESPDMKKEQDPPAKCHTKKHNPRGTHLWEFIRDILLNPDKNPGLIKWEDRSEGVFRFLKSEAVAQLWGKKKNNSSMTYEKLSRAMRYYYKREILERVDGRRLVYKFGKNARGWRENEN</sequence>
<feature type="chain" id="PRO_0000285519" description="ETS homologous factor">
    <location>
        <begin position="1"/>
        <end position="300"/>
    </location>
</feature>
<feature type="domain" description="PNT" evidence="3">
    <location>
        <begin position="29"/>
        <end position="115"/>
    </location>
</feature>
<feature type="DNA-binding region" description="ETS" evidence="2">
    <location>
        <begin position="207"/>
        <end position="289"/>
    </location>
</feature>
<feature type="region of interest" description="Disordered" evidence="4">
    <location>
        <begin position="183"/>
        <end position="202"/>
    </location>
</feature>
<feature type="compositionally biased region" description="Basic and acidic residues" evidence="4">
    <location>
        <begin position="185"/>
        <end position="195"/>
    </location>
</feature>
<accession>A2T737</accession>